<organism>
    <name type="scientific">Campylobacter concisus (strain 13826)</name>
    <dbReference type="NCBI Taxonomy" id="360104"/>
    <lineage>
        <taxon>Bacteria</taxon>
        <taxon>Pseudomonadati</taxon>
        <taxon>Campylobacterota</taxon>
        <taxon>Epsilonproteobacteria</taxon>
        <taxon>Campylobacterales</taxon>
        <taxon>Campylobacteraceae</taxon>
        <taxon>Campylobacter</taxon>
    </lineage>
</organism>
<gene>
    <name evidence="1" type="primary">ruvA</name>
    <name type="ordered locus">Ccon26_10480</name>
    <name type="ORF">CCC13826_0113</name>
</gene>
<name>RUVA_CAMC1</name>
<proteinExistence type="inferred from homology"/>
<protein>
    <recommendedName>
        <fullName evidence="1">Holliday junction branch migration complex subunit RuvA</fullName>
    </recommendedName>
</protein>
<reference key="1">
    <citation type="submission" date="2007-10" db="EMBL/GenBank/DDBJ databases">
        <title>Genome sequence of Campylobacter concisus 13826 isolated from human feces.</title>
        <authorList>
            <person name="Fouts D.E."/>
            <person name="Mongodin E.F."/>
            <person name="Puiu D."/>
            <person name="Sebastian Y."/>
            <person name="Miller W.G."/>
            <person name="Mandrell R.E."/>
            <person name="On S."/>
            <person name="Nelson K.E."/>
        </authorList>
    </citation>
    <scope>NUCLEOTIDE SEQUENCE [LARGE SCALE GENOMIC DNA]</scope>
    <source>
        <strain>13826</strain>
    </source>
</reference>
<feature type="chain" id="PRO_1000002420" description="Holliday junction branch migration complex subunit RuvA">
    <location>
        <begin position="1"/>
        <end position="184"/>
    </location>
</feature>
<feature type="region of interest" description="Domain I" evidence="1">
    <location>
        <begin position="1"/>
        <end position="64"/>
    </location>
</feature>
<feature type="region of interest" description="Domain II" evidence="1">
    <location>
        <begin position="65"/>
        <end position="134"/>
    </location>
</feature>
<feature type="region of interest" description="Flexible linker" evidence="1">
    <location>
        <begin position="134"/>
        <end position="137"/>
    </location>
</feature>
<feature type="region of interest" description="Domain III" evidence="1">
    <location>
        <begin position="138"/>
        <end position="184"/>
    </location>
</feature>
<dbReference type="EMBL" id="CP000792">
    <property type="protein sequence ID" value="EAT97633.1"/>
    <property type="molecule type" value="Genomic_DNA"/>
</dbReference>
<dbReference type="RefSeq" id="WP_012001830.1">
    <property type="nucleotide sequence ID" value="NC_009802.2"/>
</dbReference>
<dbReference type="SMR" id="A7ZDQ0"/>
<dbReference type="STRING" id="360104.CCC13826_0113"/>
<dbReference type="KEGG" id="cco:CCC13826_0113"/>
<dbReference type="eggNOG" id="COG0632">
    <property type="taxonomic scope" value="Bacteria"/>
</dbReference>
<dbReference type="HOGENOM" id="CLU_087936_3_1_7"/>
<dbReference type="OrthoDB" id="5293449at2"/>
<dbReference type="Proteomes" id="UP000001121">
    <property type="component" value="Chromosome"/>
</dbReference>
<dbReference type="GO" id="GO:0005737">
    <property type="term" value="C:cytoplasm"/>
    <property type="evidence" value="ECO:0007669"/>
    <property type="project" value="UniProtKB-SubCell"/>
</dbReference>
<dbReference type="GO" id="GO:0009379">
    <property type="term" value="C:Holliday junction helicase complex"/>
    <property type="evidence" value="ECO:0007669"/>
    <property type="project" value="InterPro"/>
</dbReference>
<dbReference type="GO" id="GO:0048476">
    <property type="term" value="C:Holliday junction resolvase complex"/>
    <property type="evidence" value="ECO:0007669"/>
    <property type="project" value="UniProtKB-UniRule"/>
</dbReference>
<dbReference type="GO" id="GO:0005524">
    <property type="term" value="F:ATP binding"/>
    <property type="evidence" value="ECO:0007669"/>
    <property type="project" value="InterPro"/>
</dbReference>
<dbReference type="GO" id="GO:0000400">
    <property type="term" value="F:four-way junction DNA binding"/>
    <property type="evidence" value="ECO:0007669"/>
    <property type="project" value="UniProtKB-UniRule"/>
</dbReference>
<dbReference type="GO" id="GO:0009378">
    <property type="term" value="F:four-way junction helicase activity"/>
    <property type="evidence" value="ECO:0007669"/>
    <property type="project" value="InterPro"/>
</dbReference>
<dbReference type="GO" id="GO:0006310">
    <property type="term" value="P:DNA recombination"/>
    <property type="evidence" value="ECO:0007669"/>
    <property type="project" value="UniProtKB-UniRule"/>
</dbReference>
<dbReference type="GO" id="GO:0006281">
    <property type="term" value="P:DNA repair"/>
    <property type="evidence" value="ECO:0007669"/>
    <property type="project" value="UniProtKB-UniRule"/>
</dbReference>
<dbReference type="CDD" id="cd14332">
    <property type="entry name" value="UBA_RuvA_C"/>
    <property type="match status" value="1"/>
</dbReference>
<dbReference type="Gene3D" id="1.10.150.20">
    <property type="entry name" value="5' to 3' exonuclease, C-terminal subdomain"/>
    <property type="match status" value="1"/>
</dbReference>
<dbReference type="Gene3D" id="1.10.8.10">
    <property type="entry name" value="DNA helicase RuvA subunit, C-terminal domain"/>
    <property type="match status" value="1"/>
</dbReference>
<dbReference type="Gene3D" id="2.40.50.140">
    <property type="entry name" value="Nucleic acid-binding proteins"/>
    <property type="match status" value="1"/>
</dbReference>
<dbReference type="HAMAP" id="MF_00031">
    <property type="entry name" value="DNA_HJ_migration_RuvA"/>
    <property type="match status" value="1"/>
</dbReference>
<dbReference type="InterPro" id="IPR013849">
    <property type="entry name" value="DNA_helicase_Holl-junc_RuvA_I"/>
</dbReference>
<dbReference type="InterPro" id="IPR003583">
    <property type="entry name" value="Hlx-hairpin-Hlx_DNA-bd_motif"/>
</dbReference>
<dbReference type="InterPro" id="IPR012340">
    <property type="entry name" value="NA-bd_OB-fold"/>
</dbReference>
<dbReference type="InterPro" id="IPR000085">
    <property type="entry name" value="RuvA"/>
</dbReference>
<dbReference type="InterPro" id="IPR010994">
    <property type="entry name" value="RuvA_2-like"/>
</dbReference>
<dbReference type="InterPro" id="IPR011114">
    <property type="entry name" value="RuvA_C"/>
</dbReference>
<dbReference type="InterPro" id="IPR036267">
    <property type="entry name" value="RuvA_C_sf"/>
</dbReference>
<dbReference type="NCBIfam" id="TIGR00084">
    <property type="entry name" value="ruvA"/>
    <property type="match status" value="1"/>
</dbReference>
<dbReference type="Pfam" id="PF14520">
    <property type="entry name" value="HHH_5"/>
    <property type="match status" value="1"/>
</dbReference>
<dbReference type="Pfam" id="PF07499">
    <property type="entry name" value="RuvA_C"/>
    <property type="match status" value="1"/>
</dbReference>
<dbReference type="Pfam" id="PF01330">
    <property type="entry name" value="RuvA_N"/>
    <property type="match status" value="1"/>
</dbReference>
<dbReference type="SMART" id="SM00278">
    <property type="entry name" value="HhH1"/>
    <property type="match status" value="2"/>
</dbReference>
<dbReference type="SUPFAM" id="SSF46929">
    <property type="entry name" value="DNA helicase RuvA subunit, C-terminal domain"/>
    <property type="match status" value="1"/>
</dbReference>
<dbReference type="SUPFAM" id="SSF50249">
    <property type="entry name" value="Nucleic acid-binding proteins"/>
    <property type="match status" value="1"/>
</dbReference>
<dbReference type="SUPFAM" id="SSF47781">
    <property type="entry name" value="RuvA domain 2-like"/>
    <property type="match status" value="1"/>
</dbReference>
<accession>A7ZDQ0</accession>
<sequence length="184" mass="19809">MIKAIEGVVTKKEPAFAVLKTNSGVSYGIFISLFCSAKLSKGEKVELAITQIIREDANLLYGFLDANEQKMFEMLIKLNGIGASTAMAVCSSLSSQAFTNAIISGDADTFKSVPGIGPKTARRIIAELSDTKLISDESVPSYQNEALLALEALGFKREKIVKILPDCKSENTSDLIKEALKKLG</sequence>
<keyword id="KW-0963">Cytoplasm</keyword>
<keyword id="KW-0227">DNA damage</keyword>
<keyword id="KW-0233">DNA recombination</keyword>
<keyword id="KW-0234">DNA repair</keyword>
<keyword id="KW-0238">DNA-binding</keyword>
<evidence type="ECO:0000255" key="1">
    <source>
        <dbReference type="HAMAP-Rule" id="MF_00031"/>
    </source>
</evidence>
<comment type="function">
    <text evidence="1">The RuvA-RuvB-RuvC complex processes Holliday junction (HJ) DNA during genetic recombination and DNA repair, while the RuvA-RuvB complex plays an important role in the rescue of blocked DNA replication forks via replication fork reversal (RFR). RuvA specifically binds to HJ cruciform DNA, conferring on it an open structure. The RuvB hexamer acts as an ATP-dependent pump, pulling dsDNA into and through the RuvAB complex. HJ branch migration allows RuvC to scan DNA until it finds its consensus sequence, where it cleaves and resolves the cruciform DNA.</text>
</comment>
<comment type="subunit">
    <text evidence="1">Homotetramer. Forms an RuvA(8)-RuvB(12)-Holliday junction (HJ) complex. HJ DNA is sandwiched between 2 RuvA tetramers; dsDNA enters through RuvA and exits via RuvB. An RuvB hexamer assembles on each DNA strand where it exits the tetramer. Each RuvB hexamer is contacted by two RuvA subunits (via domain III) on 2 adjacent RuvB subunits; this complex drives branch migration. In the full resolvosome a probable DNA-RuvA(4)-RuvB(12)-RuvC(2) complex forms which resolves the HJ.</text>
</comment>
<comment type="subcellular location">
    <subcellularLocation>
        <location evidence="1">Cytoplasm</location>
    </subcellularLocation>
</comment>
<comment type="domain">
    <text evidence="1">Has three domains with a flexible linker between the domains II and III and assumes an 'L' shape. Domain III is highly mobile and contacts RuvB.</text>
</comment>
<comment type="similarity">
    <text evidence="1">Belongs to the RuvA family.</text>
</comment>